<evidence type="ECO:0000255" key="1"/>
<evidence type="ECO:0000269" key="2">
    <source>
    </source>
</evidence>
<evidence type="ECO:0000305" key="3"/>
<evidence type="ECO:0007744" key="4">
    <source>
    </source>
</evidence>
<gene>
    <name type="primary">PHF1</name>
    <name type="ordered locus">At3g52190</name>
    <name type="ORF">F4F15.300</name>
</gene>
<feature type="chain" id="PRO_0000051123" description="SEC12-like protein 1">
    <location>
        <begin position="1"/>
        <end position="398"/>
    </location>
</feature>
<feature type="topological domain" description="Cytoplasmic" evidence="1">
    <location>
        <begin position="1"/>
        <end position="337"/>
    </location>
</feature>
<feature type="transmembrane region" description="Helical" evidence="1">
    <location>
        <begin position="338"/>
        <end position="358"/>
    </location>
</feature>
<feature type="topological domain" description="Lumenal" evidence="1">
    <location>
        <begin position="359"/>
        <end position="398"/>
    </location>
</feature>
<feature type="repeat" description="WD 1">
    <location>
        <begin position="71"/>
        <end position="110"/>
    </location>
</feature>
<feature type="repeat" description="WD 2">
    <location>
        <begin position="120"/>
        <end position="159"/>
    </location>
</feature>
<feature type="repeat" description="WD 3">
    <location>
        <begin position="162"/>
        <end position="201"/>
    </location>
</feature>
<feature type="repeat" description="WD 4">
    <location>
        <begin position="252"/>
        <end position="291"/>
    </location>
</feature>
<feature type="repeat" description="WD 5">
    <location>
        <begin position="296"/>
        <end position="334"/>
    </location>
</feature>
<feature type="modified residue" description="N-acetylmethionine" evidence="4">
    <location>
        <position position="1"/>
    </location>
</feature>
<sequence length="398" mass="43767">MEIEEASRESGHVVCGSWIRRPKKVNWVLIAKASKRRGSSVSSPALLNIFSFDPITASLSSSPLATHTLKDSDGDPVAVSVHPGGDYFVCSTSKGGCKLFELVGGATGITILAKELLPLQNAGLQKCMAFSFDGSKLAVGGVDGCLRIMEWPNLSVILDEPKAHKSIRDMDFSLDSEFLATTSTDGSARIWKAEDGFPLSTLERSGDENIELCRFSKDGTKPFLFCAAQRGDTPMVNVYDISTWKKLGFKKLSRKTASTMAVSLDGKYIALGGKDGDVSVAEVKTMEIYHYSKRLHLGQSIASLEFCPSERVMLTTSSEWGEMVTKLTVPKEWKEWQIYALLFCLFMASVIAAYVFFENSDSFWKLPMGKDQKRPKISLFGGSSSTPSEDHSRWNLDL</sequence>
<keyword id="KW-0007">Acetylation</keyword>
<keyword id="KW-0256">Endoplasmic reticulum</keyword>
<keyword id="KW-0472">Membrane</keyword>
<keyword id="KW-0653">Protein transport</keyword>
<keyword id="KW-1185">Reference proteome</keyword>
<keyword id="KW-0677">Repeat</keyword>
<keyword id="KW-0735">Signal-anchor</keyword>
<keyword id="KW-0812">Transmembrane</keyword>
<keyword id="KW-1133">Transmembrane helix</keyword>
<keyword id="KW-0813">Transport</keyword>
<keyword id="KW-0853">WD repeat</keyword>
<organism>
    <name type="scientific">Arabidopsis thaliana</name>
    <name type="common">Mouse-ear cress</name>
    <dbReference type="NCBI Taxonomy" id="3702"/>
    <lineage>
        <taxon>Eukaryota</taxon>
        <taxon>Viridiplantae</taxon>
        <taxon>Streptophyta</taxon>
        <taxon>Embryophyta</taxon>
        <taxon>Tracheophyta</taxon>
        <taxon>Spermatophyta</taxon>
        <taxon>Magnoliopsida</taxon>
        <taxon>eudicotyledons</taxon>
        <taxon>Gunneridae</taxon>
        <taxon>Pentapetalae</taxon>
        <taxon>rosids</taxon>
        <taxon>malvids</taxon>
        <taxon>Brassicales</taxon>
        <taxon>Brassicaceae</taxon>
        <taxon>Camelineae</taxon>
        <taxon>Arabidopsis</taxon>
    </lineage>
</organism>
<proteinExistence type="evidence at protein level"/>
<comment type="function">
    <text evidence="2">Involved in Pi uptake by facilitating the trafficking of PHT1-1/PHT1;1 from the endoplasmic reticulum to the plasma membrane.</text>
</comment>
<comment type="subcellular location">
    <subcellularLocation>
        <location evidence="2">Endoplasmic reticulum membrane</location>
        <topology evidence="2">Single-pass membrane protein</topology>
    </subcellularLocation>
</comment>
<comment type="tissue specificity">
    <text evidence="2">Ubiquitous with higher levels in flowers, roots and senescing leaves.</text>
</comment>
<comment type="induction">
    <text evidence="2">By Pi starvation.</text>
</comment>
<comment type="sequence caution" evidence="3">
    <conflict type="erroneous initiation">
        <sequence resource="EMBL-CDS" id="BAC42349"/>
    </conflict>
</comment>
<name>PHF1_ARATH</name>
<accession>Q8GYE0</accession>
<accession>Q9SUY6</accession>
<protein>
    <recommendedName>
        <fullName>SEC12-like protein 1</fullName>
    </recommendedName>
    <alternativeName>
        <fullName>Protein PHOSPHATE TRANSPORTER TRAFFIC FACILITATOR 1</fullName>
        <shortName>PHF-1</shortName>
    </alternativeName>
</protein>
<dbReference type="EMBL" id="AL049711">
    <property type="protein sequence ID" value="CAB41339.1"/>
    <property type="molecule type" value="Genomic_DNA"/>
</dbReference>
<dbReference type="EMBL" id="CP002686">
    <property type="protein sequence ID" value="AEE78911.1"/>
    <property type="molecule type" value="Genomic_DNA"/>
</dbReference>
<dbReference type="EMBL" id="AK117697">
    <property type="protein sequence ID" value="BAC42349.1"/>
    <property type="status" value="ALT_INIT"/>
    <property type="molecule type" value="mRNA"/>
</dbReference>
<dbReference type="PIR" id="T49098">
    <property type="entry name" value="T49098"/>
</dbReference>
<dbReference type="RefSeq" id="NP_566961.1">
    <property type="nucleotide sequence ID" value="NM_115079.4"/>
</dbReference>
<dbReference type="SMR" id="Q8GYE0"/>
<dbReference type="BioGRID" id="9702">
    <property type="interactions" value="10"/>
</dbReference>
<dbReference type="FunCoup" id="Q8GYE0">
    <property type="interactions" value="3314"/>
</dbReference>
<dbReference type="IntAct" id="Q8GYE0">
    <property type="interactions" value="10"/>
</dbReference>
<dbReference type="STRING" id="3702.Q8GYE0"/>
<dbReference type="GlyGen" id="Q8GYE0">
    <property type="glycosylation" value="1 site"/>
</dbReference>
<dbReference type="iPTMnet" id="Q8GYE0"/>
<dbReference type="PaxDb" id="3702-AT3G52190.1"/>
<dbReference type="ProteomicsDB" id="236728"/>
<dbReference type="EnsemblPlants" id="AT3G52190.1">
    <property type="protein sequence ID" value="AT3G52190.1"/>
    <property type="gene ID" value="AT3G52190"/>
</dbReference>
<dbReference type="GeneID" id="824384"/>
<dbReference type="Gramene" id="AT3G52190.1">
    <property type="protein sequence ID" value="AT3G52190.1"/>
    <property type="gene ID" value="AT3G52190"/>
</dbReference>
<dbReference type="KEGG" id="ath:AT3G52190"/>
<dbReference type="Araport" id="AT3G52190"/>
<dbReference type="TAIR" id="AT3G52190">
    <property type="gene designation" value="PHF1"/>
</dbReference>
<dbReference type="eggNOG" id="KOG0771">
    <property type="taxonomic scope" value="Eukaryota"/>
</dbReference>
<dbReference type="HOGENOM" id="CLU_058136_1_1_1"/>
<dbReference type="InParanoid" id="Q8GYE0"/>
<dbReference type="OMA" id="PMGRHQP"/>
<dbReference type="OrthoDB" id="538223at2759"/>
<dbReference type="PhylomeDB" id="Q8GYE0"/>
<dbReference type="CD-CODE" id="4299E36E">
    <property type="entry name" value="Nucleolus"/>
</dbReference>
<dbReference type="PRO" id="PR:Q8GYE0"/>
<dbReference type="Proteomes" id="UP000006548">
    <property type="component" value="Chromosome 3"/>
</dbReference>
<dbReference type="ExpressionAtlas" id="Q8GYE0">
    <property type="expression patterns" value="baseline and differential"/>
</dbReference>
<dbReference type="GO" id="GO:0005783">
    <property type="term" value="C:endoplasmic reticulum"/>
    <property type="evidence" value="ECO:0000314"/>
    <property type="project" value="TAIR"/>
</dbReference>
<dbReference type="GO" id="GO:0005789">
    <property type="term" value="C:endoplasmic reticulum membrane"/>
    <property type="evidence" value="ECO:0007669"/>
    <property type="project" value="UniProtKB-SubCell"/>
</dbReference>
<dbReference type="GO" id="GO:0005886">
    <property type="term" value="C:plasma membrane"/>
    <property type="evidence" value="ECO:0007005"/>
    <property type="project" value="TAIR"/>
</dbReference>
<dbReference type="GO" id="GO:0005085">
    <property type="term" value="F:guanyl-nucleotide exchange factor activity"/>
    <property type="evidence" value="ECO:0007669"/>
    <property type="project" value="InterPro"/>
</dbReference>
<dbReference type="GO" id="GO:0016036">
    <property type="term" value="P:cellular response to phosphate starvation"/>
    <property type="evidence" value="ECO:0000270"/>
    <property type="project" value="TAIR"/>
</dbReference>
<dbReference type="GO" id="GO:0006888">
    <property type="term" value="P:endoplasmic reticulum to Golgi vesicle-mediated transport"/>
    <property type="evidence" value="ECO:0000315"/>
    <property type="project" value="TAIR"/>
</dbReference>
<dbReference type="GO" id="GO:0006817">
    <property type="term" value="P:phosphate ion transport"/>
    <property type="evidence" value="ECO:0000315"/>
    <property type="project" value="TAIR"/>
</dbReference>
<dbReference type="GO" id="GO:0015031">
    <property type="term" value="P:protein transport"/>
    <property type="evidence" value="ECO:0007669"/>
    <property type="project" value="UniProtKB-KW"/>
</dbReference>
<dbReference type="FunFam" id="2.130.10.10:FF:000435">
    <property type="entry name" value="SEC12-like protein 1"/>
    <property type="match status" value="1"/>
</dbReference>
<dbReference type="Gene3D" id="2.130.10.10">
    <property type="entry name" value="YVTN repeat-like/Quinoprotein amine dehydrogenase"/>
    <property type="match status" value="1"/>
</dbReference>
<dbReference type="InterPro" id="IPR045260">
    <property type="entry name" value="Sec12-like"/>
</dbReference>
<dbReference type="InterPro" id="IPR015943">
    <property type="entry name" value="WD40/YVTN_repeat-like_dom_sf"/>
</dbReference>
<dbReference type="InterPro" id="IPR036322">
    <property type="entry name" value="WD40_repeat_dom_sf"/>
</dbReference>
<dbReference type="InterPro" id="IPR001680">
    <property type="entry name" value="WD40_rpt"/>
</dbReference>
<dbReference type="PANTHER" id="PTHR23284">
    <property type="entry name" value="PROLACTIN REGULATORY ELEMENT BINDING PROTEIN"/>
    <property type="match status" value="1"/>
</dbReference>
<dbReference type="PANTHER" id="PTHR23284:SF2">
    <property type="entry name" value="SEC12-LIKE PROTEIN 1"/>
    <property type="match status" value="1"/>
</dbReference>
<dbReference type="Pfam" id="PF00400">
    <property type="entry name" value="WD40"/>
    <property type="match status" value="2"/>
</dbReference>
<dbReference type="SMART" id="SM00320">
    <property type="entry name" value="WD40"/>
    <property type="match status" value="4"/>
</dbReference>
<dbReference type="SUPFAM" id="SSF50978">
    <property type="entry name" value="WD40 repeat-like"/>
    <property type="match status" value="1"/>
</dbReference>
<dbReference type="PROSITE" id="PS50082">
    <property type="entry name" value="WD_REPEATS_2"/>
    <property type="match status" value="1"/>
</dbReference>
<dbReference type="PROSITE" id="PS50294">
    <property type="entry name" value="WD_REPEATS_REGION"/>
    <property type="match status" value="1"/>
</dbReference>
<reference key="1">
    <citation type="journal article" date="2000" name="Nature">
        <title>Sequence and analysis of chromosome 3 of the plant Arabidopsis thaliana.</title>
        <authorList>
            <person name="Salanoubat M."/>
            <person name="Lemcke K."/>
            <person name="Rieger M."/>
            <person name="Ansorge W."/>
            <person name="Unseld M."/>
            <person name="Fartmann B."/>
            <person name="Valle G."/>
            <person name="Bloecker H."/>
            <person name="Perez-Alonso M."/>
            <person name="Obermaier B."/>
            <person name="Delseny M."/>
            <person name="Boutry M."/>
            <person name="Grivell L.A."/>
            <person name="Mache R."/>
            <person name="Puigdomenech P."/>
            <person name="De Simone V."/>
            <person name="Choisne N."/>
            <person name="Artiguenave F."/>
            <person name="Robert C."/>
            <person name="Brottier P."/>
            <person name="Wincker P."/>
            <person name="Cattolico L."/>
            <person name="Weissenbach J."/>
            <person name="Saurin W."/>
            <person name="Quetier F."/>
            <person name="Schaefer M."/>
            <person name="Mueller-Auer S."/>
            <person name="Gabel C."/>
            <person name="Fuchs M."/>
            <person name="Benes V."/>
            <person name="Wurmbach E."/>
            <person name="Drzonek H."/>
            <person name="Erfle H."/>
            <person name="Jordan N."/>
            <person name="Bangert S."/>
            <person name="Wiedelmann R."/>
            <person name="Kranz H."/>
            <person name="Voss H."/>
            <person name="Holland R."/>
            <person name="Brandt P."/>
            <person name="Nyakatura G."/>
            <person name="Vezzi A."/>
            <person name="D'Angelo M."/>
            <person name="Pallavicini A."/>
            <person name="Toppo S."/>
            <person name="Simionati B."/>
            <person name="Conrad A."/>
            <person name="Hornischer K."/>
            <person name="Kauer G."/>
            <person name="Loehnert T.-H."/>
            <person name="Nordsiek G."/>
            <person name="Reichelt J."/>
            <person name="Scharfe M."/>
            <person name="Schoen O."/>
            <person name="Bargues M."/>
            <person name="Terol J."/>
            <person name="Climent J."/>
            <person name="Navarro P."/>
            <person name="Collado C."/>
            <person name="Perez-Perez A."/>
            <person name="Ottenwaelder B."/>
            <person name="Duchemin D."/>
            <person name="Cooke R."/>
            <person name="Laudie M."/>
            <person name="Berger-Llauro C."/>
            <person name="Purnelle B."/>
            <person name="Masuy D."/>
            <person name="de Haan M."/>
            <person name="Maarse A.C."/>
            <person name="Alcaraz J.-P."/>
            <person name="Cottet A."/>
            <person name="Casacuberta E."/>
            <person name="Monfort A."/>
            <person name="Argiriou A."/>
            <person name="Flores M."/>
            <person name="Liguori R."/>
            <person name="Vitale D."/>
            <person name="Mannhaupt G."/>
            <person name="Haase D."/>
            <person name="Schoof H."/>
            <person name="Rudd S."/>
            <person name="Zaccaria P."/>
            <person name="Mewes H.-W."/>
            <person name="Mayer K.F.X."/>
            <person name="Kaul S."/>
            <person name="Town C.D."/>
            <person name="Koo H.L."/>
            <person name="Tallon L.J."/>
            <person name="Jenkins J."/>
            <person name="Rooney T."/>
            <person name="Rizzo M."/>
            <person name="Walts A."/>
            <person name="Utterback T."/>
            <person name="Fujii C.Y."/>
            <person name="Shea T.P."/>
            <person name="Creasy T.H."/>
            <person name="Haas B."/>
            <person name="Maiti R."/>
            <person name="Wu D."/>
            <person name="Peterson J."/>
            <person name="Van Aken S."/>
            <person name="Pai G."/>
            <person name="Militscher J."/>
            <person name="Sellers P."/>
            <person name="Gill J.E."/>
            <person name="Feldblyum T.V."/>
            <person name="Preuss D."/>
            <person name="Lin X."/>
            <person name="Nierman W.C."/>
            <person name="Salzberg S.L."/>
            <person name="White O."/>
            <person name="Venter J.C."/>
            <person name="Fraser C.M."/>
            <person name="Kaneko T."/>
            <person name="Nakamura Y."/>
            <person name="Sato S."/>
            <person name="Kato T."/>
            <person name="Asamizu E."/>
            <person name="Sasamoto S."/>
            <person name="Kimura T."/>
            <person name="Idesawa K."/>
            <person name="Kawashima K."/>
            <person name="Kishida Y."/>
            <person name="Kiyokawa C."/>
            <person name="Kohara M."/>
            <person name="Matsumoto M."/>
            <person name="Matsuno A."/>
            <person name="Muraki A."/>
            <person name="Nakayama S."/>
            <person name="Nakazaki N."/>
            <person name="Shinpo S."/>
            <person name="Takeuchi C."/>
            <person name="Wada T."/>
            <person name="Watanabe A."/>
            <person name="Yamada M."/>
            <person name="Yasuda M."/>
            <person name="Tabata S."/>
        </authorList>
    </citation>
    <scope>NUCLEOTIDE SEQUENCE [LARGE SCALE GENOMIC DNA]</scope>
    <source>
        <strain>cv. Columbia</strain>
    </source>
</reference>
<reference key="2">
    <citation type="journal article" date="2017" name="Plant J.">
        <title>Araport11: a complete reannotation of the Arabidopsis thaliana reference genome.</title>
        <authorList>
            <person name="Cheng C.Y."/>
            <person name="Krishnakumar V."/>
            <person name="Chan A.P."/>
            <person name="Thibaud-Nissen F."/>
            <person name="Schobel S."/>
            <person name="Town C.D."/>
        </authorList>
    </citation>
    <scope>GENOME REANNOTATION</scope>
    <source>
        <strain>cv. Columbia</strain>
    </source>
</reference>
<reference key="3">
    <citation type="journal article" date="2002" name="Science">
        <title>Functional annotation of a full-length Arabidopsis cDNA collection.</title>
        <authorList>
            <person name="Seki M."/>
            <person name="Narusaka M."/>
            <person name="Kamiya A."/>
            <person name="Ishida J."/>
            <person name="Satou M."/>
            <person name="Sakurai T."/>
            <person name="Nakajima M."/>
            <person name="Enju A."/>
            <person name="Akiyama K."/>
            <person name="Oono Y."/>
            <person name="Muramatsu M."/>
            <person name="Hayashizaki Y."/>
            <person name="Kawai J."/>
            <person name="Carninci P."/>
            <person name="Itoh M."/>
            <person name="Ishii Y."/>
            <person name="Arakawa T."/>
            <person name="Shibata K."/>
            <person name="Shinagawa A."/>
            <person name="Shinozaki K."/>
        </authorList>
    </citation>
    <scope>NUCLEOTIDE SEQUENCE [LARGE SCALE MRNA] OF 14-398</scope>
    <source>
        <strain>cv. Columbia</strain>
    </source>
</reference>
<reference key="4">
    <citation type="journal article" date="2005" name="Plant Cell">
        <title>PHOSPHATE TRANSPORTER TRAFFIC FACILITATOR1 is a plant-specific SEC12-related protein that enables the endoplasmic reticulum exit of a high-affinity phosphate transporter in Arabidopsis.</title>
        <authorList>
            <person name="Gonzalez E."/>
            <person name="Solano R."/>
            <person name="Rubio V."/>
            <person name="Leyva A."/>
            <person name="Paz-Ares J."/>
        </authorList>
    </citation>
    <scope>FUNCTION</scope>
    <scope>SUBCELLULAR LOCATION</scope>
    <scope>INDUCTION</scope>
    <scope>TISSUE SPECIFICITY</scope>
</reference>
<reference key="5">
    <citation type="journal article" date="2012" name="Mol. Cell. Proteomics">
        <title>Comparative large-scale characterisation of plant vs. mammal proteins reveals similar and idiosyncratic N-alpha acetylation features.</title>
        <authorList>
            <person name="Bienvenut W.V."/>
            <person name="Sumpton D."/>
            <person name="Martinez A."/>
            <person name="Lilla S."/>
            <person name="Espagne C."/>
            <person name="Meinnel T."/>
            <person name="Giglione C."/>
        </authorList>
    </citation>
    <scope>ACETYLATION [LARGE SCALE ANALYSIS] AT MET-1</scope>
    <scope>IDENTIFICATION BY MASS SPECTROMETRY [LARGE SCALE ANALYSIS]</scope>
</reference>